<evidence type="ECO:0000255" key="1">
    <source>
        <dbReference type="HAMAP-Rule" id="MF_01031"/>
    </source>
</evidence>
<feature type="chain" id="PRO_1000084264" description="3-isopropylmalate dehydratase small subunit">
    <location>
        <begin position="1"/>
        <end position="195"/>
    </location>
</feature>
<protein>
    <recommendedName>
        <fullName evidence="1">3-isopropylmalate dehydratase small subunit</fullName>
        <ecNumber evidence="1">4.2.1.33</ecNumber>
    </recommendedName>
    <alternativeName>
        <fullName evidence="1">Alpha-IPM isomerase</fullName>
        <shortName evidence="1">IPMI</shortName>
    </alternativeName>
    <alternativeName>
        <fullName evidence="1">Isopropylmalate isomerase</fullName>
    </alternativeName>
</protein>
<keyword id="KW-0028">Amino-acid biosynthesis</keyword>
<keyword id="KW-0100">Branched-chain amino acid biosynthesis</keyword>
<keyword id="KW-0432">Leucine biosynthesis</keyword>
<keyword id="KW-0456">Lyase</keyword>
<keyword id="KW-1185">Reference proteome</keyword>
<accession>A4X4C9</accession>
<proteinExistence type="inferred from homology"/>
<reference key="1">
    <citation type="journal article" date="2007" name="Proc. Natl. Acad. Sci. U.S.A.">
        <title>Genome sequencing reveals complex secondary metabolome in the marine actinomycete Salinispora tropica.</title>
        <authorList>
            <person name="Udwary D.W."/>
            <person name="Zeigler L."/>
            <person name="Asolkar R.N."/>
            <person name="Singan V."/>
            <person name="Lapidus A."/>
            <person name="Fenical W."/>
            <person name="Jensen P.R."/>
            <person name="Moore B.S."/>
        </authorList>
    </citation>
    <scope>NUCLEOTIDE SEQUENCE [LARGE SCALE GENOMIC DNA]</scope>
    <source>
        <strain>ATCC BAA-916 / DSM 44818 / JCM 13857 / NBRC 105044 / CNB-440</strain>
    </source>
</reference>
<organism>
    <name type="scientific">Salinispora tropica (strain ATCC BAA-916 / DSM 44818 / JCM 13857 / NBRC 105044 / CNB-440)</name>
    <dbReference type="NCBI Taxonomy" id="369723"/>
    <lineage>
        <taxon>Bacteria</taxon>
        <taxon>Bacillati</taxon>
        <taxon>Actinomycetota</taxon>
        <taxon>Actinomycetes</taxon>
        <taxon>Micromonosporales</taxon>
        <taxon>Micromonosporaceae</taxon>
        <taxon>Salinispora</taxon>
    </lineage>
</organism>
<comment type="function">
    <text evidence="1">Catalyzes the isomerization between 2-isopropylmalate and 3-isopropylmalate, via the formation of 2-isopropylmaleate.</text>
</comment>
<comment type="catalytic activity">
    <reaction evidence="1">
        <text>(2R,3S)-3-isopropylmalate = (2S)-2-isopropylmalate</text>
        <dbReference type="Rhea" id="RHEA:32287"/>
        <dbReference type="ChEBI" id="CHEBI:1178"/>
        <dbReference type="ChEBI" id="CHEBI:35121"/>
        <dbReference type="EC" id="4.2.1.33"/>
    </reaction>
</comment>
<comment type="pathway">
    <text evidence="1">Amino-acid biosynthesis; L-leucine biosynthesis; L-leucine from 3-methyl-2-oxobutanoate: step 2/4.</text>
</comment>
<comment type="subunit">
    <text evidence="1">Heterodimer of LeuC and LeuD.</text>
</comment>
<comment type="similarity">
    <text evidence="1">Belongs to the LeuD family. LeuD type 1 subfamily.</text>
</comment>
<sequence length="195" mass="21574">MEKFTIHTGTAVPLRLSNVDTDQIIPAVHLKRVTRTGFADALFSSWREDQAFVLNDESYSGASILVAGPEFGTGSSREHAVWALRDWGFRVVIAPRFGDIFRGNALKGGLLPVELELKAIEEIWGRIEADPSTSITVDLAARQVQVGGVNWGFPLDEFSRWRLMEGLDDIGLTLRHEPLIGAFEASRQPFLPTIA</sequence>
<name>LEUD_SALTO</name>
<dbReference type="EC" id="4.2.1.33" evidence="1"/>
<dbReference type="EMBL" id="CP000667">
    <property type="protein sequence ID" value="ABP53729.1"/>
    <property type="molecule type" value="Genomic_DNA"/>
</dbReference>
<dbReference type="RefSeq" id="WP_011905161.1">
    <property type="nucleotide sequence ID" value="NC_009380.1"/>
</dbReference>
<dbReference type="SMR" id="A4X4C9"/>
<dbReference type="STRING" id="369723.Strop_1259"/>
<dbReference type="KEGG" id="stp:Strop_1259"/>
<dbReference type="PATRIC" id="fig|369723.5.peg.1282"/>
<dbReference type="eggNOG" id="COG0066">
    <property type="taxonomic scope" value="Bacteria"/>
</dbReference>
<dbReference type="HOGENOM" id="CLU_081378_0_1_11"/>
<dbReference type="UniPathway" id="UPA00048">
    <property type="reaction ID" value="UER00071"/>
</dbReference>
<dbReference type="Proteomes" id="UP000000235">
    <property type="component" value="Chromosome"/>
</dbReference>
<dbReference type="GO" id="GO:0009316">
    <property type="term" value="C:3-isopropylmalate dehydratase complex"/>
    <property type="evidence" value="ECO:0007669"/>
    <property type="project" value="InterPro"/>
</dbReference>
<dbReference type="GO" id="GO:0003861">
    <property type="term" value="F:3-isopropylmalate dehydratase activity"/>
    <property type="evidence" value="ECO:0007669"/>
    <property type="project" value="UniProtKB-UniRule"/>
</dbReference>
<dbReference type="GO" id="GO:0009098">
    <property type="term" value="P:L-leucine biosynthetic process"/>
    <property type="evidence" value="ECO:0007669"/>
    <property type="project" value="UniProtKB-UniRule"/>
</dbReference>
<dbReference type="CDD" id="cd01577">
    <property type="entry name" value="IPMI_Swivel"/>
    <property type="match status" value="1"/>
</dbReference>
<dbReference type="FunFam" id="3.20.19.10:FF:000003">
    <property type="entry name" value="3-isopropylmalate dehydratase small subunit"/>
    <property type="match status" value="1"/>
</dbReference>
<dbReference type="Gene3D" id="3.20.19.10">
    <property type="entry name" value="Aconitase, domain 4"/>
    <property type="match status" value="1"/>
</dbReference>
<dbReference type="HAMAP" id="MF_01031">
    <property type="entry name" value="LeuD_type1"/>
    <property type="match status" value="1"/>
</dbReference>
<dbReference type="InterPro" id="IPR004431">
    <property type="entry name" value="3-IsopropMal_deHydase_ssu"/>
</dbReference>
<dbReference type="InterPro" id="IPR015928">
    <property type="entry name" value="Aconitase/3IPM_dehydase_swvl"/>
</dbReference>
<dbReference type="InterPro" id="IPR000573">
    <property type="entry name" value="AconitaseA/IPMdHydase_ssu_swvl"/>
</dbReference>
<dbReference type="InterPro" id="IPR033940">
    <property type="entry name" value="IPMI_Swivel"/>
</dbReference>
<dbReference type="InterPro" id="IPR050075">
    <property type="entry name" value="LeuD"/>
</dbReference>
<dbReference type="NCBIfam" id="TIGR00171">
    <property type="entry name" value="leuD"/>
    <property type="match status" value="1"/>
</dbReference>
<dbReference type="NCBIfam" id="NF002458">
    <property type="entry name" value="PRK01641.1"/>
    <property type="match status" value="1"/>
</dbReference>
<dbReference type="PANTHER" id="PTHR43345:SF5">
    <property type="entry name" value="3-ISOPROPYLMALATE DEHYDRATASE SMALL SUBUNIT"/>
    <property type="match status" value="1"/>
</dbReference>
<dbReference type="PANTHER" id="PTHR43345">
    <property type="entry name" value="3-ISOPROPYLMALATE DEHYDRATASE SMALL SUBUNIT 2-RELATED-RELATED"/>
    <property type="match status" value="1"/>
</dbReference>
<dbReference type="Pfam" id="PF00694">
    <property type="entry name" value="Aconitase_C"/>
    <property type="match status" value="1"/>
</dbReference>
<dbReference type="SUPFAM" id="SSF52016">
    <property type="entry name" value="LeuD/IlvD-like"/>
    <property type="match status" value="1"/>
</dbReference>
<gene>
    <name evidence="1" type="primary">leuD</name>
    <name type="ordered locus">Strop_1259</name>
</gene>